<dbReference type="EC" id="2.7.1.35"/>
<dbReference type="EMBL" id="X73124">
    <property type="protein sequence ID" value="CAA51608.1"/>
    <property type="molecule type" value="Genomic_DNA"/>
</dbReference>
<dbReference type="EMBL" id="AL009126">
    <property type="protein sequence ID" value="CAB15828.1"/>
    <property type="molecule type" value="Genomic_DNA"/>
</dbReference>
<dbReference type="PIR" id="S39707">
    <property type="entry name" value="S39707"/>
</dbReference>
<dbReference type="RefSeq" id="NP_391681.1">
    <property type="nucleotide sequence ID" value="NC_000964.3"/>
</dbReference>
<dbReference type="RefSeq" id="WP_003242645.1">
    <property type="nucleotide sequence ID" value="NZ_OZ025638.1"/>
</dbReference>
<dbReference type="PDB" id="2I5B">
    <property type="method" value="X-ray"/>
    <property type="resolution" value="2.80 A"/>
    <property type="chains" value="A/B/C/D/E=1-271"/>
</dbReference>
<dbReference type="PDBsum" id="2I5B"/>
<dbReference type="SMR" id="P39610"/>
<dbReference type="FunCoup" id="P39610">
    <property type="interactions" value="585"/>
</dbReference>
<dbReference type="STRING" id="224308.BSU38020"/>
<dbReference type="PaxDb" id="224308-BSU38020"/>
<dbReference type="EnsemblBacteria" id="CAB15828">
    <property type="protein sequence ID" value="CAB15828"/>
    <property type="gene ID" value="BSU_38020"/>
</dbReference>
<dbReference type="GeneID" id="937262"/>
<dbReference type="KEGG" id="bsu:BSU38020"/>
<dbReference type="PATRIC" id="fig|224308.179.peg.4116"/>
<dbReference type="eggNOG" id="COG0351">
    <property type="taxonomic scope" value="Bacteria"/>
</dbReference>
<dbReference type="InParanoid" id="P39610"/>
<dbReference type="OrthoDB" id="9810880at2"/>
<dbReference type="PhylomeDB" id="P39610"/>
<dbReference type="BioCyc" id="BSUB:BSU38020-MONOMER"/>
<dbReference type="SABIO-RK" id="P39610"/>
<dbReference type="EvolutionaryTrace" id="P39610"/>
<dbReference type="Proteomes" id="UP000001570">
    <property type="component" value="Chromosome"/>
</dbReference>
<dbReference type="GO" id="GO:0005829">
    <property type="term" value="C:cytosol"/>
    <property type="evidence" value="ECO:0000318"/>
    <property type="project" value="GO_Central"/>
</dbReference>
<dbReference type="GO" id="GO:0005524">
    <property type="term" value="F:ATP binding"/>
    <property type="evidence" value="ECO:0007669"/>
    <property type="project" value="UniProtKB-KW"/>
</dbReference>
<dbReference type="GO" id="GO:0008902">
    <property type="term" value="F:hydroxymethylpyrimidine kinase activity"/>
    <property type="evidence" value="ECO:0000318"/>
    <property type="project" value="GO_Central"/>
</dbReference>
<dbReference type="GO" id="GO:0046872">
    <property type="term" value="F:metal ion binding"/>
    <property type="evidence" value="ECO:0007669"/>
    <property type="project" value="UniProtKB-KW"/>
</dbReference>
<dbReference type="GO" id="GO:0008972">
    <property type="term" value="F:phosphomethylpyrimidine kinase activity"/>
    <property type="evidence" value="ECO:0000318"/>
    <property type="project" value="GO_Central"/>
</dbReference>
<dbReference type="GO" id="GO:0008478">
    <property type="term" value="F:pyridoxal kinase activity"/>
    <property type="evidence" value="ECO:0007669"/>
    <property type="project" value="UniProtKB-EC"/>
</dbReference>
<dbReference type="GO" id="GO:0009228">
    <property type="term" value="P:thiamine biosynthetic process"/>
    <property type="evidence" value="ECO:0000318"/>
    <property type="project" value="GO_Central"/>
</dbReference>
<dbReference type="CDD" id="cd01169">
    <property type="entry name" value="HMPP_kinase"/>
    <property type="match status" value="1"/>
</dbReference>
<dbReference type="FunFam" id="3.40.1190.20:FF:000003">
    <property type="entry name" value="Phosphomethylpyrimidine kinase ThiD"/>
    <property type="match status" value="1"/>
</dbReference>
<dbReference type="Gene3D" id="3.40.1190.20">
    <property type="match status" value="1"/>
</dbReference>
<dbReference type="InterPro" id="IPR004399">
    <property type="entry name" value="HMP/HMP-P_kinase_dom"/>
</dbReference>
<dbReference type="InterPro" id="IPR013749">
    <property type="entry name" value="PM/HMP-P_kinase-1"/>
</dbReference>
<dbReference type="InterPro" id="IPR029056">
    <property type="entry name" value="Ribokinase-like"/>
</dbReference>
<dbReference type="NCBIfam" id="TIGR00097">
    <property type="entry name" value="HMP-P_kinase"/>
    <property type="match status" value="1"/>
</dbReference>
<dbReference type="NCBIfam" id="NF009077">
    <property type="entry name" value="PRK12412.1"/>
    <property type="match status" value="1"/>
</dbReference>
<dbReference type="NCBIfam" id="NF009259">
    <property type="entry name" value="PRK12616.1"/>
    <property type="match status" value="1"/>
</dbReference>
<dbReference type="PANTHER" id="PTHR20858">
    <property type="entry name" value="PHOSPHOMETHYLPYRIMIDINE KINASE"/>
    <property type="match status" value="1"/>
</dbReference>
<dbReference type="PANTHER" id="PTHR20858:SF19">
    <property type="entry name" value="PYRIDOXINE KINASE"/>
    <property type="match status" value="1"/>
</dbReference>
<dbReference type="Pfam" id="PF08543">
    <property type="entry name" value="Phos_pyr_kin"/>
    <property type="match status" value="1"/>
</dbReference>
<dbReference type="SUPFAM" id="SSF53613">
    <property type="entry name" value="Ribokinase-like"/>
    <property type="match status" value="1"/>
</dbReference>
<feature type="chain" id="PRO_0000192017" description="Pyridoxine kinase">
    <location>
        <begin position="1"/>
        <end position="271"/>
    </location>
</feature>
<feature type="binding site">
    <location>
        <position position="141"/>
    </location>
    <ligand>
        <name>ATP</name>
        <dbReference type="ChEBI" id="CHEBI:30616"/>
    </ligand>
</feature>
<feature type="binding site" evidence="1">
    <location>
        <position position="144"/>
    </location>
    <ligand>
        <name>Mg(2+)</name>
        <dbReference type="ChEBI" id="CHEBI:18420"/>
    </ligand>
</feature>
<feature type="binding site">
    <location>
        <begin position="178"/>
        <end position="182"/>
    </location>
    <ligand>
        <name>ATP</name>
        <dbReference type="ChEBI" id="CHEBI:30616"/>
    </ligand>
</feature>
<feature type="binding site">
    <location>
        <position position="190"/>
    </location>
    <ligand>
        <name>ATP</name>
        <dbReference type="ChEBI" id="CHEBI:30616"/>
    </ligand>
</feature>
<feature type="binding site">
    <location>
        <position position="206"/>
    </location>
    <ligand>
        <name>ATP</name>
        <dbReference type="ChEBI" id="CHEBI:30616"/>
    </ligand>
</feature>
<feature type="binding site">
    <location>
        <position position="215"/>
    </location>
    <ligand>
        <name>ATP</name>
        <dbReference type="ChEBI" id="CHEBI:30616"/>
    </ligand>
</feature>
<feature type="binding site">
    <location>
        <position position="240"/>
    </location>
    <ligand>
        <name>ATP</name>
        <dbReference type="ChEBI" id="CHEBI:30616"/>
    </ligand>
</feature>
<feature type="strand" evidence="6">
    <location>
        <begin position="5"/>
        <end position="13"/>
    </location>
</feature>
<feature type="strand" evidence="6">
    <location>
        <begin position="16"/>
        <end position="18"/>
    </location>
</feature>
<feature type="helix" evidence="6">
    <location>
        <begin position="19"/>
        <end position="29"/>
    </location>
</feature>
<feature type="strand" evidence="6">
    <location>
        <begin position="33"/>
        <end position="44"/>
    </location>
</feature>
<feature type="turn" evidence="6">
    <location>
        <begin position="46"/>
        <end position="50"/>
    </location>
</feature>
<feature type="strand" evidence="6">
    <location>
        <begin position="52"/>
        <end position="56"/>
    </location>
</feature>
<feature type="helix" evidence="6">
    <location>
        <begin position="59"/>
        <end position="72"/>
    </location>
</feature>
<feature type="strand" evidence="6">
    <location>
        <begin position="76"/>
        <end position="80"/>
    </location>
</feature>
<feature type="helix" evidence="6">
    <location>
        <begin position="86"/>
        <end position="98"/>
    </location>
</feature>
<feature type="strand" evidence="6">
    <location>
        <begin position="102"/>
        <end position="106"/>
    </location>
</feature>
<feature type="strand" evidence="6">
    <location>
        <begin position="111"/>
        <end position="113"/>
    </location>
</feature>
<feature type="strand" evidence="6">
    <location>
        <begin position="115"/>
        <end position="120"/>
    </location>
</feature>
<feature type="helix" evidence="6">
    <location>
        <begin position="121"/>
        <end position="130"/>
    </location>
</feature>
<feature type="helix" evidence="6">
    <location>
        <begin position="132"/>
        <end position="134"/>
    </location>
</feature>
<feature type="strand" evidence="6">
    <location>
        <begin position="136"/>
        <end position="138"/>
    </location>
</feature>
<feature type="helix" evidence="6">
    <location>
        <begin position="142"/>
        <end position="149"/>
    </location>
</feature>
<feature type="helix" evidence="6">
    <location>
        <begin position="157"/>
        <end position="168"/>
    </location>
</feature>
<feature type="turn" evidence="6">
    <location>
        <begin position="169"/>
        <end position="171"/>
    </location>
</feature>
<feature type="strand" evidence="6">
    <location>
        <begin position="173"/>
        <end position="178"/>
    </location>
</feature>
<feature type="helix" evidence="6">
    <location>
        <begin position="180"/>
        <end position="182"/>
    </location>
</feature>
<feature type="strand" evidence="6">
    <location>
        <begin position="185"/>
        <end position="193"/>
    </location>
</feature>
<feature type="strand" evidence="6">
    <location>
        <begin position="198"/>
        <end position="203"/>
    </location>
</feature>
<feature type="helix" evidence="6">
    <location>
        <begin position="214"/>
        <end position="227"/>
    </location>
</feature>
<feature type="helix" evidence="6">
    <location>
        <begin position="232"/>
        <end position="248"/>
    </location>
</feature>
<feature type="strand" evidence="6">
    <location>
        <begin position="253"/>
        <end position="256"/>
    </location>
</feature>
<feature type="helix" evidence="6">
    <location>
        <begin position="264"/>
        <end position="268"/>
    </location>
</feature>
<name>PDXK_BACSU</name>
<accession>P39610</accession>
<proteinExistence type="evidence at protein level"/>
<evidence type="ECO:0000250" key="1"/>
<evidence type="ECO:0000269" key="2">
    <source>
    </source>
</evidence>
<evidence type="ECO:0000269" key="3">
    <source>
    </source>
</evidence>
<evidence type="ECO:0000305" key="4"/>
<evidence type="ECO:0000305" key="5">
    <source>
    </source>
</evidence>
<evidence type="ECO:0007829" key="6">
    <source>
        <dbReference type="PDB" id="2I5B"/>
    </source>
</evidence>
<gene>
    <name type="primary">pdxK</name>
    <name type="synonym">ywdB</name>
    <name type="ordered locus">BSU38020</name>
    <name type="ORF">ipa-52r</name>
</gene>
<keyword id="KW-0002">3D-structure</keyword>
<keyword id="KW-0067">ATP-binding</keyword>
<keyword id="KW-0418">Kinase</keyword>
<keyword id="KW-0460">Magnesium</keyword>
<keyword id="KW-0479">Metal-binding</keyword>
<keyword id="KW-0547">Nucleotide-binding</keyword>
<keyword id="KW-1185">Reference proteome</keyword>
<keyword id="KW-0808">Transferase</keyword>
<protein>
    <recommendedName>
        <fullName>Pyridoxine kinase</fullName>
        <ecNumber>2.7.1.35</ecNumber>
    </recommendedName>
    <alternativeName>
        <fullName>PN/PL/PM kinase</fullName>
    </alternativeName>
    <alternativeName>
        <fullName>Pyridoxal kinase</fullName>
    </alternativeName>
    <alternativeName>
        <fullName>Pyridoxamine kinase</fullName>
    </alternativeName>
    <alternativeName>
        <fullName>Vitamin B6 kinase</fullName>
    </alternativeName>
</protein>
<organism>
    <name type="scientific">Bacillus subtilis (strain 168)</name>
    <dbReference type="NCBI Taxonomy" id="224308"/>
    <lineage>
        <taxon>Bacteria</taxon>
        <taxon>Bacillati</taxon>
        <taxon>Bacillota</taxon>
        <taxon>Bacilli</taxon>
        <taxon>Bacillales</taxon>
        <taxon>Bacillaceae</taxon>
        <taxon>Bacillus</taxon>
    </lineage>
</organism>
<sequence>MSMHKALTIAGSDSSGGAGIQADLKTFQEKNVYGMTALTVIVAMDPNNSWNHQVFPIDTDTIRAQLATITDGIGVDAMKTGMLPTVDIIELAAKTIKEKQLKNVVIDPVMVCKGANEVLYPEHAQALREQLAPLATVITPNLFEASQLSGMDELKTVDDMIEAAKKIHALGAQYVVITGGGKLKHEKAVDVLYDGETAEVLESEMIDTPYTHGAGCTFSAAVTAELAKGAEVKEAIYAAKEFITAAIKESFPLNQYVGPTKHSALRLNQQS</sequence>
<reference key="1">
    <citation type="journal article" date="1993" name="Mol. Microbiol.">
        <title>Bacillus subtilis genome project: cloning and sequencing of the 97 kb region from 325 degrees to 333 degrees.</title>
        <authorList>
            <person name="Glaser P."/>
            <person name="Kunst F."/>
            <person name="Arnaud M."/>
            <person name="Coudart M.P."/>
            <person name="Gonzales W."/>
            <person name="Hullo M.-F."/>
            <person name="Ionescu M."/>
            <person name="Lubochinsky B."/>
            <person name="Marcelino L."/>
            <person name="Moszer I."/>
            <person name="Presecan E."/>
            <person name="Santana M."/>
            <person name="Schneider E."/>
            <person name="Schweizer J."/>
            <person name="Vertes A."/>
            <person name="Rapoport G."/>
            <person name="Danchin A."/>
        </authorList>
    </citation>
    <scope>NUCLEOTIDE SEQUENCE [GENOMIC DNA]</scope>
    <source>
        <strain>168</strain>
    </source>
</reference>
<reference key="2">
    <citation type="journal article" date="1997" name="Nature">
        <title>The complete genome sequence of the Gram-positive bacterium Bacillus subtilis.</title>
        <authorList>
            <person name="Kunst F."/>
            <person name="Ogasawara N."/>
            <person name="Moszer I."/>
            <person name="Albertini A.M."/>
            <person name="Alloni G."/>
            <person name="Azevedo V."/>
            <person name="Bertero M.G."/>
            <person name="Bessieres P."/>
            <person name="Bolotin A."/>
            <person name="Borchert S."/>
            <person name="Borriss R."/>
            <person name="Boursier L."/>
            <person name="Brans A."/>
            <person name="Braun M."/>
            <person name="Brignell S.C."/>
            <person name="Bron S."/>
            <person name="Brouillet S."/>
            <person name="Bruschi C.V."/>
            <person name="Caldwell B."/>
            <person name="Capuano V."/>
            <person name="Carter N.M."/>
            <person name="Choi S.-K."/>
            <person name="Codani J.-J."/>
            <person name="Connerton I.F."/>
            <person name="Cummings N.J."/>
            <person name="Daniel R.A."/>
            <person name="Denizot F."/>
            <person name="Devine K.M."/>
            <person name="Duesterhoeft A."/>
            <person name="Ehrlich S.D."/>
            <person name="Emmerson P.T."/>
            <person name="Entian K.-D."/>
            <person name="Errington J."/>
            <person name="Fabret C."/>
            <person name="Ferrari E."/>
            <person name="Foulger D."/>
            <person name="Fritz C."/>
            <person name="Fujita M."/>
            <person name="Fujita Y."/>
            <person name="Fuma S."/>
            <person name="Galizzi A."/>
            <person name="Galleron N."/>
            <person name="Ghim S.-Y."/>
            <person name="Glaser P."/>
            <person name="Goffeau A."/>
            <person name="Golightly E.J."/>
            <person name="Grandi G."/>
            <person name="Guiseppi G."/>
            <person name="Guy B.J."/>
            <person name="Haga K."/>
            <person name="Haiech J."/>
            <person name="Harwood C.R."/>
            <person name="Henaut A."/>
            <person name="Hilbert H."/>
            <person name="Holsappel S."/>
            <person name="Hosono S."/>
            <person name="Hullo M.-F."/>
            <person name="Itaya M."/>
            <person name="Jones L.-M."/>
            <person name="Joris B."/>
            <person name="Karamata D."/>
            <person name="Kasahara Y."/>
            <person name="Klaerr-Blanchard M."/>
            <person name="Klein C."/>
            <person name="Kobayashi Y."/>
            <person name="Koetter P."/>
            <person name="Koningstein G."/>
            <person name="Krogh S."/>
            <person name="Kumano M."/>
            <person name="Kurita K."/>
            <person name="Lapidus A."/>
            <person name="Lardinois S."/>
            <person name="Lauber J."/>
            <person name="Lazarevic V."/>
            <person name="Lee S.-M."/>
            <person name="Levine A."/>
            <person name="Liu H."/>
            <person name="Masuda S."/>
            <person name="Mauel C."/>
            <person name="Medigue C."/>
            <person name="Medina N."/>
            <person name="Mellado R.P."/>
            <person name="Mizuno M."/>
            <person name="Moestl D."/>
            <person name="Nakai S."/>
            <person name="Noback M."/>
            <person name="Noone D."/>
            <person name="O'Reilly M."/>
            <person name="Ogawa K."/>
            <person name="Ogiwara A."/>
            <person name="Oudega B."/>
            <person name="Park S.-H."/>
            <person name="Parro V."/>
            <person name="Pohl T.M."/>
            <person name="Portetelle D."/>
            <person name="Porwollik S."/>
            <person name="Prescott A.M."/>
            <person name="Presecan E."/>
            <person name="Pujic P."/>
            <person name="Purnelle B."/>
            <person name="Rapoport G."/>
            <person name="Rey M."/>
            <person name="Reynolds S."/>
            <person name="Rieger M."/>
            <person name="Rivolta C."/>
            <person name="Rocha E."/>
            <person name="Roche B."/>
            <person name="Rose M."/>
            <person name="Sadaie Y."/>
            <person name="Sato T."/>
            <person name="Scanlan E."/>
            <person name="Schleich S."/>
            <person name="Schroeter R."/>
            <person name="Scoffone F."/>
            <person name="Sekiguchi J."/>
            <person name="Sekowska A."/>
            <person name="Seror S.J."/>
            <person name="Serror P."/>
            <person name="Shin B.-S."/>
            <person name="Soldo B."/>
            <person name="Sorokin A."/>
            <person name="Tacconi E."/>
            <person name="Takagi T."/>
            <person name="Takahashi H."/>
            <person name="Takemaru K."/>
            <person name="Takeuchi M."/>
            <person name="Tamakoshi A."/>
            <person name="Tanaka T."/>
            <person name="Terpstra P."/>
            <person name="Tognoni A."/>
            <person name="Tosato V."/>
            <person name="Uchiyama S."/>
            <person name="Vandenbol M."/>
            <person name="Vannier F."/>
            <person name="Vassarotti A."/>
            <person name="Viari A."/>
            <person name="Wambutt R."/>
            <person name="Wedler E."/>
            <person name="Wedler H."/>
            <person name="Weitzenegger T."/>
            <person name="Winters P."/>
            <person name="Wipat A."/>
            <person name="Yamamoto H."/>
            <person name="Yamane K."/>
            <person name="Yasumoto K."/>
            <person name="Yata K."/>
            <person name="Yoshida K."/>
            <person name="Yoshikawa H.-F."/>
            <person name="Zumstein E."/>
            <person name="Yoshikawa H."/>
            <person name="Danchin A."/>
        </authorList>
    </citation>
    <scope>NUCLEOTIDE SEQUENCE [LARGE SCALE GENOMIC DNA]</scope>
    <source>
        <strain>168</strain>
    </source>
</reference>
<reference key="3">
    <citation type="journal article" date="2004" name="J. Bacteriol.">
        <title>Characterization of two kinases involved in thiamine pyrophosphate and pyridoxal phosphate biosynthesis in Bacillus subtilis: 4-amino-5-hydroxymethyl-2-methylpyrimidine kinase and pyridoxal kinase.</title>
        <authorList>
            <person name="Park J.-H."/>
            <person name="Burns K."/>
            <person name="Kinsland C."/>
            <person name="Begley T.P."/>
        </authorList>
    </citation>
    <scope>FUNCTION AS PYRIDOXAL KINASE</scope>
    <scope>CATALYTIC ACTIVITY</scope>
    <scope>BIOPHYSICOCHEMICAL PROPERTIES</scope>
    <source>
        <strain>168 / CU1065</strain>
    </source>
</reference>
<reference key="4">
    <citation type="journal article" date="2006" name="J. Mol. Biol.">
        <title>The crystal structure of an ADP complex of Bacillus subtilis pyridoxal kinase provides evidence for the parallel emergence of enzyme activity during evolution.</title>
        <authorList>
            <person name="Newman J.A."/>
            <person name="Das S.K."/>
            <person name="Sedelnikova S.E."/>
            <person name="Rice D.W."/>
        </authorList>
    </citation>
    <scope>X-RAY CRYSTALLOGRAPHY (2.8 ANGSTROMS) IN COMPLEX WITH ADP</scope>
    <scope>SUBUNIT</scope>
</reference>
<comment type="function">
    <text evidence="2">Phosphorylates B6 vitamers; functions in a salvage pathway. Uses pyridoxal, pyridoxine, and pyridoxamine as substrates. Can also use hydroxymethylpyrimidine (HMP) as substrate.</text>
</comment>
<comment type="catalytic activity">
    <reaction evidence="2">
        <text>pyridoxal + ATP = pyridoxal 5'-phosphate + ADP + H(+)</text>
        <dbReference type="Rhea" id="RHEA:10224"/>
        <dbReference type="ChEBI" id="CHEBI:15378"/>
        <dbReference type="ChEBI" id="CHEBI:17310"/>
        <dbReference type="ChEBI" id="CHEBI:30616"/>
        <dbReference type="ChEBI" id="CHEBI:456216"/>
        <dbReference type="ChEBI" id="CHEBI:597326"/>
        <dbReference type="EC" id="2.7.1.35"/>
    </reaction>
</comment>
<comment type="biophysicochemical properties">
    <kinetics>
        <KM evidence="2">2 mM for HMP</KM>
        <KM evidence="2">46.6 uM for pyridoxal</KM>
    </kinetics>
</comment>
<comment type="subunit">
    <text evidence="3">Homodimer.</text>
</comment>
<comment type="similarity">
    <text evidence="4">Belongs to the ThiD family.</text>
</comment>
<comment type="caution">
    <text evidence="5">Was originally annotated in the complete genome as thiD.</text>
</comment>